<evidence type="ECO:0000256" key="1">
    <source>
        <dbReference type="SAM" id="MobiDB-lite"/>
    </source>
</evidence>
<evidence type="ECO:0000269" key="2">
    <source>
    </source>
</evidence>
<evidence type="ECO:0000305" key="3"/>
<sequence>MSKNVGKLVKIWNESEVLVDRKSKFQARCCPLQNQKDIPSILQELTQNNKSVSKASHMHMYAWRTAEVSNNLHLQQEQKKKGNKANKSNNSHVNKSRNITVQPKNIEQGCADCGEAGAGQRLLTLLERANIFNVLVIVTRWYGGTPLGSSRFRHISTCAVETLKKGGFLP</sequence>
<gene>
    <name type="ordered locus">YDL177C</name>
</gene>
<proteinExistence type="evidence at protein level"/>
<name>YD177_YEAST</name>
<feature type="chain" id="PRO_0000207658" description="IMPACT family member YDL177C">
    <location>
        <begin position="1"/>
        <end position="170"/>
    </location>
</feature>
<feature type="region of interest" description="Disordered" evidence="1">
    <location>
        <begin position="79"/>
        <end position="98"/>
    </location>
</feature>
<reference key="1">
    <citation type="journal article" date="1997" name="Nature">
        <title>The nucleotide sequence of Saccharomyces cerevisiae chromosome IV.</title>
        <authorList>
            <person name="Jacq C."/>
            <person name="Alt-Moerbe J."/>
            <person name="Andre B."/>
            <person name="Arnold W."/>
            <person name="Bahr A."/>
            <person name="Ballesta J.P.G."/>
            <person name="Bargues M."/>
            <person name="Baron L."/>
            <person name="Becker A."/>
            <person name="Biteau N."/>
            <person name="Bloecker H."/>
            <person name="Blugeon C."/>
            <person name="Boskovic J."/>
            <person name="Brandt P."/>
            <person name="Brueckner M."/>
            <person name="Buitrago M.J."/>
            <person name="Coster F."/>
            <person name="Delaveau T."/>
            <person name="del Rey F."/>
            <person name="Dujon B."/>
            <person name="Eide L.G."/>
            <person name="Garcia-Cantalejo J.M."/>
            <person name="Goffeau A."/>
            <person name="Gomez-Peris A."/>
            <person name="Granotier C."/>
            <person name="Hanemann V."/>
            <person name="Hankeln T."/>
            <person name="Hoheisel J.D."/>
            <person name="Jaeger W."/>
            <person name="Jimenez A."/>
            <person name="Jonniaux J.-L."/>
            <person name="Kraemer C."/>
            <person name="Kuester H."/>
            <person name="Laamanen P."/>
            <person name="Legros Y."/>
            <person name="Louis E.J."/>
            <person name="Moeller-Rieker S."/>
            <person name="Monnet A."/>
            <person name="Moro M."/>
            <person name="Mueller-Auer S."/>
            <person name="Nussbaumer B."/>
            <person name="Paricio N."/>
            <person name="Paulin L."/>
            <person name="Perea J."/>
            <person name="Perez-Alonso M."/>
            <person name="Perez-Ortin J.E."/>
            <person name="Pohl T.M."/>
            <person name="Prydz H."/>
            <person name="Purnelle B."/>
            <person name="Rasmussen S.W."/>
            <person name="Remacha M.A."/>
            <person name="Revuelta J.L."/>
            <person name="Rieger M."/>
            <person name="Salom D."/>
            <person name="Saluz H.P."/>
            <person name="Saiz J.E."/>
            <person name="Saren A.-M."/>
            <person name="Schaefer M."/>
            <person name="Scharfe M."/>
            <person name="Schmidt E.R."/>
            <person name="Schneider C."/>
            <person name="Scholler P."/>
            <person name="Schwarz S."/>
            <person name="Soler-Mira A."/>
            <person name="Urrestarazu L.A."/>
            <person name="Verhasselt P."/>
            <person name="Vissers S."/>
            <person name="Voet M."/>
            <person name="Volckaert G."/>
            <person name="Wagner G."/>
            <person name="Wambutt R."/>
            <person name="Wedler E."/>
            <person name="Wedler H."/>
            <person name="Woelfl S."/>
            <person name="Harris D.E."/>
            <person name="Bowman S."/>
            <person name="Brown D."/>
            <person name="Churcher C.M."/>
            <person name="Connor R."/>
            <person name="Dedman K."/>
            <person name="Gentles S."/>
            <person name="Hamlin N."/>
            <person name="Hunt S."/>
            <person name="Jones L."/>
            <person name="McDonald S."/>
            <person name="Murphy L.D."/>
            <person name="Niblett D."/>
            <person name="Odell C."/>
            <person name="Oliver K."/>
            <person name="Rajandream M.A."/>
            <person name="Richards C."/>
            <person name="Shore L."/>
            <person name="Walsh S.V."/>
            <person name="Barrell B.G."/>
            <person name="Dietrich F.S."/>
            <person name="Mulligan J.T."/>
            <person name="Allen E."/>
            <person name="Araujo R."/>
            <person name="Aviles E."/>
            <person name="Berno A."/>
            <person name="Carpenter J."/>
            <person name="Chen E."/>
            <person name="Cherry J.M."/>
            <person name="Chung E."/>
            <person name="Duncan M."/>
            <person name="Hunicke-Smith S."/>
            <person name="Hyman R.W."/>
            <person name="Komp C."/>
            <person name="Lashkari D."/>
            <person name="Lew H."/>
            <person name="Lin D."/>
            <person name="Mosedale D."/>
            <person name="Nakahara K."/>
            <person name="Namath A."/>
            <person name="Oefner P."/>
            <person name="Oh C."/>
            <person name="Petel F.X."/>
            <person name="Roberts D."/>
            <person name="Schramm S."/>
            <person name="Schroeder M."/>
            <person name="Shogren T."/>
            <person name="Shroff N."/>
            <person name="Winant A."/>
            <person name="Yelton M.A."/>
            <person name="Botstein D."/>
            <person name="Davis R.W."/>
            <person name="Johnston M."/>
            <person name="Andrews S."/>
            <person name="Brinkman R."/>
            <person name="Cooper J."/>
            <person name="Ding H."/>
            <person name="Du Z."/>
            <person name="Favello A."/>
            <person name="Fulton L."/>
            <person name="Gattung S."/>
            <person name="Greco T."/>
            <person name="Hallsworth K."/>
            <person name="Hawkins J."/>
            <person name="Hillier L.W."/>
            <person name="Jier M."/>
            <person name="Johnson D."/>
            <person name="Johnston L."/>
            <person name="Kirsten J."/>
            <person name="Kucaba T."/>
            <person name="Langston Y."/>
            <person name="Latreille P."/>
            <person name="Le T."/>
            <person name="Mardis E."/>
            <person name="Menezes S."/>
            <person name="Miller N."/>
            <person name="Nhan M."/>
            <person name="Pauley A."/>
            <person name="Peluso D."/>
            <person name="Rifkin L."/>
            <person name="Riles L."/>
            <person name="Taich A."/>
            <person name="Trevaskis E."/>
            <person name="Vignati D."/>
            <person name="Wilcox L."/>
            <person name="Wohldman P."/>
            <person name="Vaudin M."/>
            <person name="Wilson R."/>
            <person name="Waterston R."/>
            <person name="Albermann K."/>
            <person name="Hani J."/>
            <person name="Heumann K."/>
            <person name="Kleine K."/>
            <person name="Mewes H.-W."/>
            <person name="Zollner A."/>
            <person name="Zaccaria P."/>
        </authorList>
    </citation>
    <scope>NUCLEOTIDE SEQUENCE [LARGE SCALE GENOMIC DNA]</scope>
    <source>
        <strain>ATCC 204508 / S288c</strain>
    </source>
</reference>
<reference key="2">
    <citation type="journal article" date="2014" name="G3 (Bethesda)">
        <title>The reference genome sequence of Saccharomyces cerevisiae: Then and now.</title>
        <authorList>
            <person name="Engel S.R."/>
            <person name="Dietrich F.S."/>
            <person name="Fisk D.G."/>
            <person name="Binkley G."/>
            <person name="Balakrishnan R."/>
            <person name="Costanzo M.C."/>
            <person name="Dwight S.S."/>
            <person name="Hitz B.C."/>
            <person name="Karra K."/>
            <person name="Nash R.S."/>
            <person name="Weng S."/>
            <person name="Wong E.D."/>
            <person name="Lloyd P."/>
            <person name="Skrzypek M.S."/>
            <person name="Miyasato S.R."/>
            <person name="Simison M."/>
            <person name="Cherry J.M."/>
        </authorList>
    </citation>
    <scope>GENOME REANNOTATION</scope>
    <source>
        <strain>ATCC 204508 / S288c</strain>
    </source>
</reference>
<reference key="3">
    <citation type="journal article" date="2007" name="Genome Res.">
        <title>Approaching a complete repository of sequence-verified protein-encoding clones for Saccharomyces cerevisiae.</title>
        <authorList>
            <person name="Hu Y."/>
            <person name="Rolfs A."/>
            <person name="Bhullar B."/>
            <person name="Murthy T.V.S."/>
            <person name="Zhu C."/>
            <person name="Berger M.F."/>
            <person name="Camargo A.A."/>
            <person name="Kelley F."/>
            <person name="McCarron S."/>
            <person name="Jepson D."/>
            <person name="Richardson A."/>
            <person name="Raphael J."/>
            <person name="Moreira D."/>
            <person name="Taycher E."/>
            <person name="Zuo D."/>
            <person name="Mohr S."/>
            <person name="Kane M.F."/>
            <person name="Williamson J."/>
            <person name="Simpson A.J.G."/>
            <person name="Bulyk M.L."/>
            <person name="Harlow E."/>
            <person name="Marsischky G."/>
            <person name="Kolodner R.D."/>
            <person name="LaBaer J."/>
        </authorList>
    </citation>
    <scope>NUCLEOTIDE SEQUENCE [GENOMIC DNA]</scope>
    <source>
        <strain>ATCC 204508 / S288c</strain>
    </source>
</reference>
<reference key="4">
    <citation type="journal article" date="2003" name="Nature">
        <title>Global analysis of protein expression in yeast.</title>
        <authorList>
            <person name="Ghaemmaghami S."/>
            <person name="Huh W.-K."/>
            <person name="Bower K."/>
            <person name="Howson R.W."/>
            <person name="Belle A."/>
            <person name="Dephoure N."/>
            <person name="O'Shea E.K."/>
            <person name="Weissman J.S."/>
        </authorList>
    </citation>
    <scope>LEVEL OF PROTEIN EXPRESSION [LARGE SCALE ANALYSIS]</scope>
</reference>
<organism>
    <name type="scientific">Saccharomyces cerevisiae (strain ATCC 204508 / S288c)</name>
    <name type="common">Baker's yeast</name>
    <dbReference type="NCBI Taxonomy" id="559292"/>
    <lineage>
        <taxon>Eukaryota</taxon>
        <taxon>Fungi</taxon>
        <taxon>Dikarya</taxon>
        <taxon>Ascomycota</taxon>
        <taxon>Saccharomycotina</taxon>
        <taxon>Saccharomycetes</taxon>
        <taxon>Saccharomycetales</taxon>
        <taxon>Saccharomycetaceae</taxon>
        <taxon>Saccharomyces</taxon>
    </lineage>
</organism>
<comment type="miscellaneous">
    <text evidence="2">Present with 907 molecules/cell in log phase SD medium.</text>
</comment>
<comment type="similarity">
    <text evidence="3">Belongs to the IMPACT family.</text>
</comment>
<dbReference type="EMBL" id="Z67750">
    <property type="protein sequence ID" value="CAA91568.1"/>
    <property type="molecule type" value="Genomic_DNA"/>
</dbReference>
<dbReference type="EMBL" id="Z74225">
    <property type="protein sequence ID" value="CAA98751.1"/>
    <property type="molecule type" value="Genomic_DNA"/>
</dbReference>
<dbReference type="EMBL" id="AY557642">
    <property type="protein sequence ID" value="AAS55968.1"/>
    <property type="molecule type" value="Genomic_DNA"/>
</dbReference>
<dbReference type="EMBL" id="BK006938">
    <property type="protein sequence ID" value="DAA11685.1"/>
    <property type="molecule type" value="Genomic_DNA"/>
</dbReference>
<dbReference type="PIR" id="S61035">
    <property type="entry name" value="S61035"/>
</dbReference>
<dbReference type="RefSeq" id="NP_010104.1">
    <property type="nucleotide sequence ID" value="NM_001180237.1"/>
</dbReference>
<dbReference type="SMR" id="Q12257"/>
<dbReference type="BioGRID" id="31889">
    <property type="interactions" value="51"/>
</dbReference>
<dbReference type="FunCoup" id="Q12257">
    <property type="interactions" value="27"/>
</dbReference>
<dbReference type="STRING" id="4932.YDL177C"/>
<dbReference type="iPTMnet" id="Q12257"/>
<dbReference type="PaxDb" id="4932-YDL177C"/>
<dbReference type="PeptideAtlas" id="Q12257"/>
<dbReference type="EnsemblFungi" id="YDL177C_mRNA">
    <property type="protein sequence ID" value="YDL177C"/>
    <property type="gene ID" value="YDL177C"/>
</dbReference>
<dbReference type="GeneID" id="851377"/>
<dbReference type="KEGG" id="sce:YDL177C"/>
<dbReference type="AGR" id="SGD:S000002336"/>
<dbReference type="SGD" id="S000002336">
    <property type="gene designation" value="YDL177C"/>
</dbReference>
<dbReference type="VEuPathDB" id="FungiDB:YDL177C"/>
<dbReference type="eggNOG" id="KOG3299">
    <property type="taxonomic scope" value="Eukaryota"/>
</dbReference>
<dbReference type="HOGENOM" id="CLU_045276_2_2_1"/>
<dbReference type="InParanoid" id="Q12257"/>
<dbReference type="OMA" id="SHPHMYA"/>
<dbReference type="OrthoDB" id="69641at2759"/>
<dbReference type="BioCyc" id="YEAST:G3O-29565-MONOMER"/>
<dbReference type="BioGRID-ORCS" id="851377">
    <property type="hits" value="4 hits in 10 CRISPR screens"/>
</dbReference>
<dbReference type="PRO" id="PR:Q12257"/>
<dbReference type="Proteomes" id="UP000002311">
    <property type="component" value="Chromosome IV"/>
</dbReference>
<dbReference type="RNAct" id="Q12257">
    <property type="molecule type" value="protein"/>
</dbReference>
<dbReference type="GO" id="GO:0005737">
    <property type="term" value="C:cytoplasm"/>
    <property type="evidence" value="ECO:0000318"/>
    <property type="project" value="GO_Central"/>
</dbReference>
<dbReference type="GO" id="GO:0140469">
    <property type="term" value="P:GCN2-mediated signaling"/>
    <property type="evidence" value="ECO:0000318"/>
    <property type="project" value="GO_Central"/>
</dbReference>
<dbReference type="GO" id="GO:0006446">
    <property type="term" value="P:regulation of translational initiation"/>
    <property type="evidence" value="ECO:0000318"/>
    <property type="project" value="GO_Central"/>
</dbReference>
<dbReference type="Gene3D" id="3.30.230.30">
    <property type="entry name" value="Impact, N-terminal domain"/>
    <property type="match status" value="1"/>
</dbReference>
<dbReference type="InterPro" id="IPR023582">
    <property type="entry name" value="Impact"/>
</dbReference>
<dbReference type="InterPro" id="IPR001498">
    <property type="entry name" value="Impact_N"/>
</dbReference>
<dbReference type="InterPro" id="IPR036956">
    <property type="entry name" value="Impact_N_sf"/>
</dbReference>
<dbReference type="InterPro" id="IPR020568">
    <property type="entry name" value="Ribosomal_Su5_D2-typ_SF"/>
</dbReference>
<dbReference type="InterPro" id="IPR020569">
    <property type="entry name" value="UPF0029_Impact_CS"/>
</dbReference>
<dbReference type="PANTHER" id="PTHR16301:SF17">
    <property type="entry name" value="IMPACT FAMILY MEMBER YDL177C"/>
    <property type="match status" value="1"/>
</dbReference>
<dbReference type="PANTHER" id="PTHR16301">
    <property type="entry name" value="IMPACT-RELATED"/>
    <property type="match status" value="1"/>
</dbReference>
<dbReference type="Pfam" id="PF01205">
    <property type="entry name" value="UPF0029"/>
    <property type="match status" value="1"/>
</dbReference>
<dbReference type="SUPFAM" id="SSF54211">
    <property type="entry name" value="Ribosomal protein S5 domain 2-like"/>
    <property type="match status" value="1"/>
</dbReference>
<dbReference type="PROSITE" id="PS00910">
    <property type="entry name" value="UPF0029"/>
    <property type="match status" value="1"/>
</dbReference>
<accession>Q12257</accession>
<accession>D6VRH5</accession>
<keyword id="KW-1185">Reference proteome</keyword>
<protein>
    <recommendedName>
        <fullName>IMPACT family member YDL177C</fullName>
    </recommendedName>
</protein>